<keyword id="KW-0130">Cell adhesion</keyword>
<keyword id="KW-1003">Cell membrane</keyword>
<keyword id="KW-0966">Cell projection</keyword>
<keyword id="KW-0963">Cytoplasm</keyword>
<keyword id="KW-0206">Cytoskeleton</keyword>
<keyword id="KW-1015">Disulfide bond</keyword>
<keyword id="KW-0325">Glycoprotein</keyword>
<keyword id="KW-0339">Growth factor</keyword>
<keyword id="KW-0472">Membrane</keyword>
<keyword id="KW-0873">Pyrrolidone carboxylic acid</keyword>
<keyword id="KW-1185">Reference proteome</keyword>
<keyword id="KW-0964">Secreted</keyword>
<keyword id="KW-0732">Signal</keyword>
<keyword id="KW-0812">Transmembrane</keyword>
<keyword id="KW-1133">Transmembrane helix</keyword>
<comment type="function">
    <text evidence="1">Ligand for the receptor-type protein-tyrosine kinase KIT. Plays an essential role in the regulation of cell survival and proliferation, hematopoiesis, stem cell maintenance, gametogenesis, mast cell development, migration and function, and in melanogenesis. KITLG/SCF binding can activate several signaling pathways. Promotes phosphorylation of PIK3R1, the regulatory subunit of phosphatidylinositol 3-kinase, and subsequent activation of the kinase AKT1. KITLG/SCF and KIT also transmit signals via GRB2 and activation of RAS, RAF1 and the MAP kinases MAPK1/ERK2 and/or MAPK3/ERK1. KITLG/SCF and KIT promote activation of STAT family members STAT1, STAT3 and STAT5. KITLG/SCF and KIT promote activation of PLCG1, leading to the production of the cellular signaling molecules diacylglycerol and inositol 1,4,5-trisphosphate. KITLG/SCF acts synergistically with other cytokines, probably interleukins (By similarity).</text>
</comment>
<comment type="subunit">
    <text evidence="1 6">Homodimer, non-covalently linked (Probable). Heterotetramer with KIT, binding two KIT molecules; thereby mediates KIT dimerization and subsequent activation by autophosphorylation (By similarity).</text>
</comment>
<comment type="subcellular location">
    <subcellularLocation>
        <location evidence="3">Cytoplasm</location>
    </subcellularLocation>
    <subcellularLocation>
        <location evidence="1">Cytoplasm</location>
        <location evidence="1">Cytoskeleton</location>
    </subcellularLocation>
    <subcellularLocation>
        <location evidence="3">Cell membrane</location>
        <topology evidence="1">Single-pass type I membrane protein</topology>
    </subcellularLocation>
    <subcellularLocation>
        <location evidence="3">Cell projection</location>
        <location evidence="3">Lamellipodium</location>
    </subcellularLocation>
    <subcellularLocation>
        <location evidence="3">Cell projection</location>
        <location evidence="3">Filopodium</location>
    </subcellularLocation>
</comment>
<comment type="subcellular location">
    <molecule>Soluble KIT ligand</molecule>
    <subcellularLocation>
        <location evidence="1">Secreted</location>
    </subcellularLocation>
</comment>
<comment type="PTM">
    <text evidence="1">A soluble form is produced by proteolytic processing of the extracellular domain.</text>
</comment>
<comment type="similarity">
    <text evidence="6">Belongs to the SCF family.</text>
</comment>
<evidence type="ECO:0000250" key="1"/>
<evidence type="ECO:0000250" key="2">
    <source>
        <dbReference type="UniProtKB" id="P21581"/>
    </source>
</evidence>
<evidence type="ECO:0000250" key="3">
    <source>
        <dbReference type="UniProtKB" id="P21583"/>
    </source>
</evidence>
<evidence type="ECO:0000255" key="4"/>
<evidence type="ECO:0000269" key="5">
    <source>
    </source>
</evidence>
<evidence type="ECO:0000305" key="6"/>
<dbReference type="EMBL" id="L07786">
    <property type="protein sequence ID" value="AAA53670.1"/>
    <property type="molecule type" value="mRNA"/>
</dbReference>
<dbReference type="EMBL" id="AB209954">
    <property type="protein sequence ID" value="BAE48720.1"/>
    <property type="molecule type" value="mRNA"/>
</dbReference>
<dbReference type="PIR" id="I46575">
    <property type="entry name" value="I46575"/>
</dbReference>
<dbReference type="RefSeq" id="NP_999434.2">
    <property type="nucleotide sequence ID" value="NM_214269.2"/>
</dbReference>
<dbReference type="RefSeq" id="XP_013853552.1">
    <property type="nucleotide sequence ID" value="XM_013998098.1"/>
</dbReference>
<dbReference type="SMR" id="Q29030"/>
<dbReference type="FunCoup" id="Q29030">
    <property type="interactions" value="350"/>
</dbReference>
<dbReference type="STRING" id="9823.ENSSSCP00000056565"/>
<dbReference type="GlyCosmos" id="Q29030">
    <property type="glycosylation" value="4 sites, No reported glycans"/>
</dbReference>
<dbReference type="GlyGen" id="Q29030">
    <property type="glycosylation" value="4 sites"/>
</dbReference>
<dbReference type="PaxDb" id="9823-ENSSSCP00000000985"/>
<dbReference type="Ensembl" id="ENSSSCT00110051612">
    <property type="protein sequence ID" value="ENSSSCP00110036105"/>
    <property type="gene ID" value="ENSSSCG00110026840"/>
</dbReference>
<dbReference type="GeneID" id="397509"/>
<dbReference type="KEGG" id="ssc:397509"/>
<dbReference type="CTD" id="4254"/>
<dbReference type="eggNOG" id="ENOG502QTGT">
    <property type="taxonomic scope" value="Eukaryota"/>
</dbReference>
<dbReference type="InParanoid" id="Q29030"/>
<dbReference type="OrthoDB" id="8445223at2759"/>
<dbReference type="Proteomes" id="UP000008227">
    <property type="component" value="Unplaced"/>
</dbReference>
<dbReference type="Proteomes" id="UP000314985">
    <property type="component" value="Unplaced"/>
</dbReference>
<dbReference type="Proteomes" id="UP000694570">
    <property type="component" value="Unplaced"/>
</dbReference>
<dbReference type="Proteomes" id="UP000694571">
    <property type="component" value="Unplaced"/>
</dbReference>
<dbReference type="Proteomes" id="UP000694720">
    <property type="component" value="Unplaced"/>
</dbReference>
<dbReference type="Proteomes" id="UP000694722">
    <property type="component" value="Unplaced"/>
</dbReference>
<dbReference type="Proteomes" id="UP000694723">
    <property type="component" value="Unplaced"/>
</dbReference>
<dbReference type="Proteomes" id="UP000694724">
    <property type="component" value="Unplaced"/>
</dbReference>
<dbReference type="Proteomes" id="UP000694725">
    <property type="component" value="Unplaced"/>
</dbReference>
<dbReference type="Proteomes" id="UP000694726">
    <property type="component" value="Unplaced"/>
</dbReference>
<dbReference type="Proteomes" id="UP000694727">
    <property type="component" value="Unplaced"/>
</dbReference>
<dbReference type="Proteomes" id="UP000694728">
    <property type="component" value="Unplaced"/>
</dbReference>
<dbReference type="GO" id="GO:0005737">
    <property type="term" value="C:cytoplasm"/>
    <property type="evidence" value="ECO:0000250"/>
    <property type="project" value="UniProtKB"/>
</dbReference>
<dbReference type="GO" id="GO:0005856">
    <property type="term" value="C:cytoskeleton"/>
    <property type="evidence" value="ECO:0007669"/>
    <property type="project" value="UniProtKB-SubCell"/>
</dbReference>
<dbReference type="GO" id="GO:0005576">
    <property type="term" value="C:extracellular region"/>
    <property type="evidence" value="ECO:0007669"/>
    <property type="project" value="UniProtKB-SubCell"/>
</dbReference>
<dbReference type="GO" id="GO:0030175">
    <property type="term" value="C:filopodium"/>
    <property type="evidence" value="ECO:0000250"/>
    <property type="project" value="UniProtKB"/>
</dbReference>
<dbReference type="GO" id="GO:0030027">
    <property type="term" value="C:lamellipodium"/>
    <property type="evidence" value="ECO:0000250"/>
    <property type="project" value="UniProtKB"/>
</dbReference>
<dbReference type="GO" id="GO:0005886">
    <property type="term" value="C:plasma membrane"/>
    <property type="evidence" value="ECO:0000250"/>
    <property type="project" value="UniProtKB"/>
</dbReference>
<dbReference type="GO" id="GO:0005125">
    <property type="term" value="F:cytokine activity"/>
    <property type="evidence" value="ECO:0000318"/>
    <property type="project" value="GO_Central"/>
</dbReference>
<dbReference type="GO" id="GO:0008083">
    <property type="term" value="F:growth factor activity"/>
    <property type="evidence" value="ECO:0007669"/>
    <property type="project" value="UniProtKB-KW"/>
</dbReference>
<dbReference type="GO" id="GO:0005173">
    <property type="term" value="F:stem cell factor receptor binding"/>
    <property type="evidence" value="ECO:0000318"/>
    <property type="project" value="GO_Central"/>
</dbReference>
<dbReference type="GO" id="GO:0007155">
    <property type="term" value="P:cell adhesion"/>
    <property type="evidence" value="ECO:0007669"/>
    <property type="project" value="UniProtKB-KW"/>
</dbReference>
<dbReference type="GO" id="GO:0008284">
    <property type="term" value="P:positive regulation of cell population proliferation"/>
    <property type="evidence" value="ECO:0000318"/>
    <property type="project" value="GO_Central"/>
</dbReference>
<dbReference type="FunFam" id="1.20.1250.10:FF:000004">
    <property type="entry name" value="Kit ligand"/>
    <property type="match status" value="1"/>
</dbReference>
<dbReference type="Gene3D" id="1.20.1250.10">
    <property type="match status" value="1"/>
</dbReference>
<dbReference type="InterPro" id="IPR009079">
    <property type="entry name" value="4_helix_cytokine-like_core"/>
</dbReference>
<dbReference type="InterPro" id="IPR003452">
    <property type="entry name" value="SCF"/>
</dbReference>
<dbReference type="PANTHER" id="PTHR11574">
    <property type="entry name" value="KIT LIGAND"/>
    <property type="match status" value="1"/>
</dbReference>
<dbReference type="PANTHER" id="PTHR11574:SF0">
    <property type="entry name" value="KIT LIGAND"/>
    <property type="match status" value="1"/>
</dbReference>
<dbReference type="Pfam" id="PF02404">
    <property type="entry name" value="SCF"/>
    <property type="match status" value="1"/>
</dbReference>
<dbReference type="PIRSF" id="PIRSF015599">
    <property type="entry name" value="SCF"/>
    <property type="match status" value="1"/>
</dbReference>
<dbReference type="SUPFAM" id="SSF47266">
    <property type="entry name" value="4-helical cytokines"/>
    <property type="match status" value="1"/>
</dbReference>
<reference key="1">
    <citation type="journal article" date="1994" name="Biol. Reprod.">
        <title>Porcine stem cell factor/c-kit ligand: its molecular cloning and localization within the uterus.</title>
        <authorList>
            <person name="Zhang Z."/>
            <person name="Anthony R.V."/>
        </authorList>
    </citation>
    <scope>NUCLEOTIDE SEQUENCE [MRNA]</scope>
    <source>
        <tissue>Uterus</tissue>
    </source>
</reference>
<reference key="2">
    <citation type="journal article" date="2006" name="Anim. Genet.">
        <title>Sequencing, mapping and nucleotide variation of porcine coat color genes EDNRB, MYO5A, KITLG, SLC45A2, RAB27A, SILV and MITF.</title>
        <authorList>
            <person name="Okumura N."/>
            <person name="Hayashi T."/>
            <person name="Sekikawa H."/>
            <person name="Matsumoto T."/>
            <person name="Mikawa A."/>
            <person name="Hamasima N."/>
            <person name="Awata T."/>
        </authorList>
    </citation>
    <scope>NUCLEOTIDE SEQUENCE [MRNA]</scope>
    <scope>VARIANTS ARG-124; ASN-149 AND ALA-248</scope>
    <source>
        <tissue>Kidney</tissue>
    </source>
</reference>
<gene>
    <name type="primary">KITLG</name>
    <name type="synonym">MGF</name>
</gene>
<feature type="signal peptide" evidence="1">
    <location>
        <begin position="1"/>
        <end position="25"/>
    </location>
</feature>
<feature type="chain" id="PRO_0000031916" description="Kit ligand">
    <location>
        <begin position="26"/>
        <end position="274"/>
    </location>
</feature>
<feature type="chain" id="PRO_0000292277" description="Soluble KIT ligand">
    <location>
        <begin position="26"/>
        <end position="191"/>
    </location>
</feature>
<feature type="topological domain" description="Extracellular" evidence="4">
    <location>
        <begin position="26"/>
        <end position="215"/>
    </location>
</feature>
<feature type="transmembrane region" description="Helical" evidence="4">
    <location>
        <begin position="216"/>
        <end position="238"/>
    </location>
</feature>
<feature type="topological domain" description="Cytoplasmic" evidence="4">
    <location>
        <begin position="239"/>
        <end position="274"/>
    </location>
</feature>
<feature type="modified residue" description="Pyrrolidone carboxylic acid" evidence="2">
    <location>
        <position position="26"/>
    </location>
</feature>
<feature type="glycosylation site" description="N-linked (GlcNAc...) asparagine" evidence="4">
    <location>
        <position position="90"/>
    </location>
</feature>
<feature type="glycosylation site" description="N-linked (GlcNAc...) asparagine" evidence="4">
    <location>
        <position position="97"/>
    </location>
</feature>
<feature type="glycosylation site" description="N-linked (GlcNAc...) asparagine" evidence="4">
    <location>
        <position position="145"/>
    </location>
</feature>
<feature type="glycosylation site" description="N-linked (GlcNAc...) asparagine" evidence="4">
    <location>
        <position position="196"/>
    </location>
</feature>
<feature type="disulfide bond" evidence="1">
    <location>
        <begin position="29"/>
        <end position="114"/>
    </location>
</feature>
<feature type="disulfide bond" evidence="1">
    <location>
        <begin position="68"/>
        <end position="164"/>
    </location>
</feature>
<feature type="sequence variant" evidence="5">
    <original>K</original>
    <variation>R</variation>
    <location>
        <position position="124"/>
    </location>
</feature>
<feature type="sequence variant" evidence="5">
    <original>D</original>
    <variation>N</variation>
    <location>
        <position position="149"/>
    </location>
</feature>
<feature type="sequence variant" evidence="5">
    <original>T</original>
    <variation>A</variation>
    <location>
        <position position="248"/>
    </location>
</feature>
<proteinExistence type="evidence at transcript level"/>
<protein>
    <recommendedName>
        <fullName>Kit ligand</fullName>
    </recommendedName>
    <alternativeName>
        <fullName>Mast cell growth factor</fullName>
        <shortName>MGF</shortName>
    </alternativeName>
    <alternativeName>
        <fullName>Stem cell factor</fullName>
        <shortName>SCF</shortName>
    </alternativeName>
    <alternativeName>
        <fullName>c-Kit ligand</fullName>
    </alternativeName>
    <component>
        <recommendedName>
            <fullName>Soluble KIT ligand</fullName>
            <shortName>sKITLG</shortName>
        </recommendedName>
    </component>
</protein>
<sequence>MKKTQTWIITCIYLQLLLFNPLVRTQGICRNRVTDDVKDVTKLVANLPKDYKITLKYVPGMDVLPSHCWISEMVEQLSVSLTDLLDKFSNISEGLSNYSIIDKLVKIVDDLVECMEEHSFENVKKSSKSPEPRLFTPEKFFGIFNRSIDAFKDLEMVAPKTSECVISSTLTPEKDSRVSVTKPFMLPPVAASSLRNDSSSSNRKASDSIEDSSLQWAAVALPAFFSLVIGFAFGALYWKKKQPNLTRTVENIQINEEDNEISMLQEKEREFQEV</sequence>
<name>SCF_PIG</name>
<accession>Q29030</accession>
<accession>Q2WG86</accession>
<organism>
    <name type="scientific">Sus scrofa</name>
    <name type="common">Pig</name>
    <dbReference type="NCBI Taxonomy" id="9823"/>
    <lineage>
        <taxon>Eukaryota</taxon>
        <taxon>Metazoa</taxon>
        <taxon>Chordata</taxon>
        <taxon>Craniata</taxon>
        <taxon>Vertebrata</taxon>
        <taxon>Euteleostomi</taxon>
        <taxon>Mammalia</taxon>
        <taxon>Eutheria</taxon>
        <taxon>Laurasiatheria</taxon>
        <taxon>Artiodactyla</taxon>
        <taxon>Suina</taxon>
        <taxon>Suidae</taxon>
        <taxon>Sus</taxon>
    </lineage>
</organism>